<reference key="1">
    <citation type="journal article" date="2006" name="Nat. Biotechnol.">
        <title>Genome sequence of the bioplastic-producing 'Knallgas' bacterium Ralstonia eutropha H16.</title>
        <authorList>
            <person name="Pohlmann A."/>
            <person name="Fricke W.F."/>
            <person name="Reinecke F."/>
            <person name="Kusian B."/>
            <person name="Liesegang H."/>
            <person name="Cramm R."/>
            <person name="Eitinger T."/>
            <person name="Ewering C."/>
            <person name="Poetter M."/>
            <person name="Schwartz E."/>
            <person name="Strittmatter A."/>
            <person name="Voss I."/>
            <person name="Gottschalk G."/>
            <person name="Steinbuechel A."/>
            <person name="Friedrich B."/>
            <person name="Bowien B."/>
        </authorList>
    </citation>
    <scope>NUCLEOTIDE SEQUENCE [LARGE SCALE GENOMIC DNA]</scope>
    <source>
        <strain>ATCC 17699 / DSM 428 / KCTC 22496 / NCIMB 10442 / H16 / Stanier 337</strain>
    </source>
</reference>
<dbReference type="EMBL" id="AM260479">
    <property type="protein sequence ID" value="CAJ94540.1"/>
    <property type="molecule type" value="Genomic_DNA"/>
</dbReference>
<dbReference type="RefSeq" id="WP_010812386.1">
    <property type="nucleotide sequence ID" value="NZ_CP039287.1"/>
</dbReference>
<dbReference type="SMR" id="Q0K631"/>
<dbReference type="STRING" id="381666.H16_A3472"/>
<dbReference type="GeneID" id="34309464"/>
<dbReference type="KEGG" id="reh:H16_A3472"/>
<dbReference type="eggNOG" id="COG0094">
    <property type="taxonomic scope" value="Bacteria"/>
</dbReference>
<dbReference type="HOGENOM" id="CLU_061015_2_1_4"/>
<dbReference type="OrthoDB" id="9806626at2"/>
<dbReference type="Proteomes" id="UP000008210">
    <property type="component" value="Chromosome 1"/>
</dbReference>
<dbReference type="GO" id="GO:1990904">
    <property type="term" value="C:ribonucleoprotein complex"/>
    <property type="evidence" value="ECO:0007669"/>
    <property type="project" value="UniProtKB-KW"/>
</dbReference>
<dbReference type="GO" id="GO:0005840">
    <property type="term" value="C:ribosome"/>
    <property type="evidence" value="ECO:0007669"/>
    <property type="project" value="UniProtKB-KW"/>
</dbReference>
<dbReference type="GO" id="GO:0019843">
    <property type="term" value="F:rRNA binding"/>
    <property type="evidence" value="ECO:0007669"/>
    <property type="project" value="UniProtKB-UniRule"/>
</dbReference>
<dbReference type="GO" id="GO:0003735">
    <property type="term" value="F:structural constituent of ribosome"/>
    <property type="evidence" value="ECO:0007669"/>
    <property type="project" value="InterPro"/>
</dbReference>
<dbReference type="GO" id="GO:0000049">
    <property type="term" value="F:tRNA binding"/>
    <property type="evidence" value="ECO:0007669"/>
    <property type="project" value="UniProtKB-UniRule"/>
</dbReference>
<dbReference type="GO" id="GO:0006412">
    <property type="term" value="P:translation"/>
    <property type="evidence" value="ECO:0007669"/>
    <property type="project" value="UniProtKB-UniRule"/>
</dbReference>
<dbReference type="FunFam" id="3.30.1440.10:FF:000001">
    <property type="entry name" value="50S ribosomal protein L5"/>
    <property type="match status" value="1"/>
</dbReference>
<dbReference type="Gene3D" id="3.30.1440.10">
    <property type="match status" value="1"/>
</dbReference>
<dbReference type="HAMAP" id="MF_01333_B">
    <property type="entry name" value="Ribosomal_uL5_B"/>
    <property type="match status" value="1"/>
</dbReference>
<dbReference type="InterPro" id="IPR002132">
    <property type="entry name" value="Ribosomal_uL5"/>
</dbReference>
<dbReference type="InterPro" id="IPR020930">
    <property type="entry name" value="Ribosomal_uL5_bac-type"/>
</dbReference>
<dbReference type="InterPro" id="IPR031309">
    <property type="entry name" value="Ribosomal_uL5_C"/>
</dbReference>
<dbReference type="InterPro" id="IPR020929">
    <property type="entry name" value="Ribosomal_uL5_CS"/>
</dbReference>
<dbReference type="InterPro" id="IPR022803">
    <property type="entry name" value="Ribosomal_uL5_dom_sf"/>
</dbReference>
<dbReference type="InterPro" id="IPR031310">
    <property type="entry name" value="Ribosomal_uL5_N"/>
</dbReference>
<dbReference type="NCBIfam" id="NF000585">
    <property type="entry name" value="PRK00010.1"/>
    <property type="match status" value="1"/>
</dbReference>
<dbReference type="PANTHER" id="PTHR11994">
    <property type="entry name" value="60S RIBOSOMAL PROTEIN L11-RELATED"/>
    <property type="match status" value="1"/>
</dbReference>
<dbReference type="Pfam" id="PF00281">
    <property type="entry name" value="Ribosomal_L5"/>
    <property type="match status" value="1"/>
</dbReference>
<dbReference type="Pfam" id="PF00673">
    <property type="entry name" value="Ribosomal_L5_C"/>
    <property type="match status" value="1"/>
</dbReference>
<dbReference type="PIRSF" id="PIRSF002161">
    <property type="entry name" value="Ribosomal_L5"/>
    <property type="match status" value="1"/>
</dbReference>
<dbReference type="SUPFAM" id="SSF55282">
    <property type="entry name" value="RL5-like"/>
    <property type="match status" value="1"/>
</dbReference>
<dbReference type="PROSITE" id="PS00358">
    <property type="entry name" value="RIBOSOMAL_L5"/>
    <property type="match status" value="1"/>
</dbReference>
<protein>
    <recommendedName>
        <fullName evidence="1">Large ribosomal subunit protein uL5</fullName>
    </recommendedName>
    <alternativeName>
        <fullName evidence="2">50S ribosomal protein L5</fullName>
    </alternativeName>
</protein>
<feature type="chain" id="PRO_1000052805" description="Large ribosomal subunit protein uL5">
    <location>
        <begin position="1"/>
        <end position="180"/>
    </location>
</feature>
<sequence>MAARLQEFYKEQVVPKLIEQFGYKSVMEVPRITKITLNMGLGEAINDKKIIENAVGDLTKIAGQKPVVTKAKKAIAGFKIRQGYPIGAMVTLRGERMFEFLDRFVTVALPRVRDFRGVSGRSFDGRGNYNIGVKEQIIFPEIEYDKIDALRGLNISITTTAKNDEEAKALLGAFKFPFRN</sequence>
<gene>
    <name evidence="1" type="primary">rplE</name>
    <name type="ordered locus">H16_A3472</name>
</gene>
<accession>Q0K631</accession>
<evidence type="ECO:0000255" key="1">
    <source>
        <dbReference type="HAMAP-Rule" id="MF_01333"/>
    </source>
</evidence>
<evidence type="ECO:0000305" key="2"/>
<keyword id="KW-1185">Reference proteome</keyword>
<keyword id="KW-0687">Ribonucleoprotein</keyword>
<keyword id="KW-0689">Ribosomal protein</keyword>
<keyword id="KW-0694">RNA-binding</keyword>
<keyword id="KW-0699">rRNA-binding</keyword>
<keyword id="KW-0820">tRNA-binding</keyword>
<proteinExistence type="inferred from homology"/>
<comment type="function">
    <text evidence="1">This is one of the proteins that bind and probably mediate the attachment of the 5S RNA into the large ribosomal subunit, where it forms part of the central protuberance. In the 70S ribosome it contacts protein S13 of the 30S subunit (bridge B1b), connecting the 2 subunits; this bridge is implicated in subunit movement. Contacts the P site tRNA; the 5S rRNA and some of its associated proteins might help stabilize positioning of ribosome-bound tRNAs.</text>
</comment>
<comment type="subunit">
    <text evidence="1">Part of the 50S ribosomal subunit; part of the 5S rRNA/L5/L18/L25 subcomplex. Contacts the 5S rRNA and the P site tRNA. Forms a bridge to the 30S subunit in the 70S ribosome.</text>
</comment>
<comment type="similarity">
    <text evidence="1">Belongs to the universal ribosomal protein uL5 family.</text>
</comment>
<organism>
    <name type="scientific">Cupriavidus necator (strain ATCC 17699 / DSM 428 / KCTC 22496 / NCIMB 10442 / H16 / Stanier 337)</name>
    <name type="common">Ralstonia eutropha</name>
    <dbReference type="NCBI Taxonomy" id="381666"/>
    <lineage>
        <taxon>Bacteria</taxon>
        <taxon>Pseudomonadati</taxon>
        <taxon>Pseudomonadota</taxon>
        <taxon>Betaproteobacteria</taxon>
        <taxon>Burkholderiales</taxon>
        <taxon>Burkholderiaceae</taxon>
        <taxon>Cupriavidus</taxon>
    </lineage>
</organism>
<name>RL5_CUPNH</name>